<proteinExistence type="inferred from homology"/>
<organism>
    <name type="scientific">Streptococcus pneumoniae (strain P1031)</name>
    <dbReference type="NCBI Taxonomy" id="488223"/>
    <lineage>
        <taxon>Bacteria</taxon>
        <taxon>Bacillati</taxon>
        <taxon>Bacillota</taxon>
        <taxon>Bacilli</taxon>
        <taxon>Lactobacillales</taxon>
        <taxon>Streptococcaceae</taxon>
        <taxon>Streptococcus</taxon>
    </lineage>
</organism>
<protein>
    <recommendedName>
        <fullName evidence="1">Ribonuclease Z</fullName>
        <shortName evidence="1">RNase Z</shortName>
        <ecNumber evidence="1">3.1.26.11</ecNumber>
    </recommendedName>
    <alternativeName>
        <fullName evidence="1">tRNA 3 endonuclease</fullName>
    </alternativeName>
    <alternativeName>
        <fullName evidence="1">tRNase Z</fullName>
    </alternativeName>
</protein>
<gene>
    <name evidence="1" type="primary">rnz</name>
    <name type="ordered locus">SPP_0695</name>
</gene>
<feature type="chain" id="PRO_1000187999" description="Ribonuclease Z">
    <location>
        <begin position="1"/>
        <end position="309"/>
    </location>
</feature>
<feature type="active site" description="Proton acceptor" evidence="1">
    <location>
        <position position="67"/>
    </location>
</feature>
<feature type="binding site" evidence="1">
    <location>
        <position position="63"/>
    </location>
    <ligand>
        <name>Zn(2+)</name>
        <dbReference type="ChEBI" id="CHEBI:29105"/>
        <label>1</label>
        <note>catalytic</note>
    </ligand>
</feature>
<feature type="binding site" evidence="1">
    <location>
        <position position="65"/>
    </location>
    <ligand>
        <name>Zn(2+)</name>
        <dbReference type="ChEBI" id="CHEBI:29105"/>
        <label>1</label>
        <note>catalytic</note>
    </ligand>
</feature>
<feature type="binding site" evidence="1">
    <location>
        <position position="67"/>
    </location>
    <ligand>
        <name>Zn(2+)</name>
        <dbReference type="ChEBI" id="CHEBI:29105"/>
        <label>2</label>
        <note>catalytic</note>
    </ligand>
</feature>
<feature type="binding site" evidence="1">
    <location>
        <position position="68"/>
    </location>
    <ligand>
        <name>Zn(2+)</name>
        <dbReference type="ChEBI" id="CHEBI:29105"/>
        <label>2</label>
        <note>catalytic</note>
    </ligand>
</feature>
<feature type="binding site" evidence="1">
    <location>
        <position position="145"/>
    </location>
    <ligand>
        <name>Zn(2+)</name>
        <dbReference type="ChEBI" id="CHEBI:29105"/>
        <label>1</label>
        <note>catalytic</note>
    </ligand>
</feature>
<feature type="binding site" evidence="1">
    <location>
        <position position="216"/>
    </location>
    <ligand>
        <name>Zn(2+)</name>
        <dbReference type="ChEBI" id="CHEBI:29105"/>
        <label>1</label>
        <note>catalytic</note>
    </ligand>
</feature>
<feature type="binding site" evidence="1">
    <location>
        <position position="216"/>
    </location>
    <ligand>
        <name>Zn(2+)</name>
        <dbReference type="ChEBI" id="CHEBI:29105"/>
        <label>2</label>
        <note>catalytic</note>
    </ligand>
</feature>
<feature type="binding site" evidence="1">
    <location>
        <position position="274"/>
    </location>
    <ligand>
        <name>Zn(2+)</name>
        <dbReference type="ChEBI" id="CHEBI:29105"/>
        <label>2</label>
        <note>catalytic</note>
    </ligand>
</feature>
<reference key="1">
    <citation type="journal article" date="2010" name="Genome Biol.">
        <title>Structure and dynamics of the pan-genome of Streptococcus pneumoniae and closely related species.</title>
        <authorList>
            <person name="Donati C."/>
            <person name="Hiller N.L."/>
            <person name="Tettelin H."/>
            <person name="Muzzi A."/>
            <person name="Croucher N.J."/>
            <person name="Angiuoli S.V."/>
            <person name="Oggioni M."/>
            <person name="Dunning Hotopp J.C."/>
            <person name="Hu F.Z."/>
            <person name="Riley D.R."/>
            <person name="Covacci A."/>
            <person name="Mitchell T.J."/>
            <person name="Bentley S.D."/>
            <person name="Kilian M."/>
            <person name="Ehrlich G.D."/>
            <person name="Rappuoli R."/>
            <person name="Moxon E.R."/>
            <person name="Masignani V."/>
        </authorList>
    </citation>
    <scope>NUCLEOTIDE SEQUENCE [LARGE SCALE GENOMIC DNA]</scope>
    <source>
        <strain>P1031</strain>
    </source>
</reference>
<keyword id="KW-0255">Endonuclease</keyword>
<keyword id="KW-0378">Hydrolase</keyword>
<keyword id="KW-0479">Metal-binding</keyword>
<keyword id="KW-0540">Nuclease</keyword>
<keyword id="KW-0819">tRNA processing</keyword>
<keyword id="KW-0862">Zinc</keyword>
<accession>C1CJE0</accession>
<sequence>MDIQFLGTGAGQPSKARNVSSLALKLLDEINEVWLFDCGEGTQNRILETTIRPRKVSKIFITHLHGDHIFGLPGFLSSRAFQANEEQTDLEIYGPQGIKSFVLTSLRVSGSRLPYRIHFHEFDQDSLGKILETDKFTVYAEELDHTIFCVGYRVMQKDLEGTLDAEKLKAAGVPFGPLFGKIKNGQDLVLEDGTEIKAADYISAPRPGKIITILGDTRKTDASVRLAVNADVLVHESTYGKGDEKIARNHGHSTNMQAAQVAVEAGAKRLLLNHISARFLSKDISKLKKDAATIFENVHVVKDLEEVEI</sequence>
<comment type="function">
    <text evidence="1">Zinc phosphodiesterase, which displays some tRNA 3'-processing endonuclease activity. Probably involved in tRNA maturation, by removing a 3'-trailer from precursor tRNA.</text>
</comment>
<comment type="catalytic activity">
    <reaction evidence="1">
        <text>Endonucleolytic cleavage of RNA, removing extra 3' nucleotides from tRNA precursor, generating 3' termini of tRNAs. A 3'-hydroxy group is left at the tRNA terminus and a 5'-phosphoryl group is left at the trailer molecule.</text>
        <dbReference type="EC" id="3.1.26.11"/>
    </reaction>
</comment>
<comment type="cofactor">
    <cofactor evidence="1">
        <name>Zn(2+)</name>
        <dbReference type="ChEBI" id="CHEBI:29105"/>
    </cofactor>
    <text evidence="1">Binds 2 Zn(2+) ions.</text>
</comment>
<comment type="subunit">
    <text evidence="1">Homodimer.</text>
</comment>
<comment type="similarity">
    <text evidence="1">Belongs to the RNase Z family.</text>
</comment>
<name>RNZ_STRZP</name>
<dbReference type="EC" id="3.1.26.11" evidence="1"/>
<dbReference type="EMBL" id="CP000920">
    <property type="protein sequence ID" value="ACO21712.1"/>
    <property type="molecule type" value="Genomic_DNA"/>
</dbReference>
<dbReference type="RefSeq" id="WP_000354336.1">
    <property type="nucleotide sequence ID" value="NC_012467.1"/>
</dbReference>
<dbReference type="SMR" id="C1CJE0"/>
<dbReference type="GeneID" id="45653932"/>
<dbReference type="KEGG" id="spp:SPP_0695"/>
<dbReference type="HOGENOM" id="CLU_031317_2_0_9"/>
<dbReference type="GO" id="GO:0042781">
    <property type="term" value="F:3'-tRNA processing endoribonuclease activity"/>
    <property type="evidence" value="ECO:0007669"/>
    <property type="project" value="UniProtKB-UniRule"/>
</dbReference>
<dbReference type="GO" id="GO:0008270">
    <property type="term" value="F:zinc ion binding"/>
    <property type="evidence" value="ECO:0007669"/>
    <property type="project" value="UniProtKB-UniRule"/>
</dbReference>
<dbReference type="CDD" id="cd07717">
    <property type="entry name" value="RNaseZ_ZiPD-like_MBL-fold"/>
    <property type="match status" value="1"/>
</dbReference>
<dbReference type="FunFam" id="3.60.15.10:FF:000002">
    <property type="entry name" value="Ribonuclease Z"/>
    <property type="match status" value="1"/>
</dbReference>
<dbReference type="Gene3D" id="3.60.15.10">
    <property type="entry name" value="Ribonuclease Z/Hydroxyacylglutathione hydrolase-like"/>
    <property type="match status" value="1"/>
</dbReference>
<dbReference type="HAMAP" id="MF_01818">
    <property type="entry name" value="RNase_Z_BN"/>
    <property type="match status" value="1"/>
</dbReference>
<dbReference type="InterPro" id="IPR001279">
    <property type="entry name" value="Metallo-B-lactamas"/>
</dbReference>
<dbReference type="InterPro" id="IPR036866">
    <property type="entry name" value="RibonucZ/Hydroxyglut_hydro"/>
</dbReference>
<dbReference type="InterPro" id="IPR013471">
    <property type="entry name" value="RNase_Z/BN"/>
</dbReference>
<dbReference type="NCBIfam" id="NF000801">
    <property type="entry name" value="PRK00055.1-3"/>
    <property type="match status" value="1"/>
</dbReference>
<dbReference type="NCBIfam" id="TIGR02651">
    <property type="entry name" value="RNase_Z"/>
    <property type="match status" value="1"/>
</dbReference>
<dbReference type="PANTHER" id="PTHR46018">
    <property type="entry name" value="ZINC PHOSPHODIESTERASE ELAC PROTEIN 1"/>
    <property type="match status" value="1"/>
</dbReference>
<dbReference type="PANTHER" id="PTHR46018:SF2">
    <property type="entry name" value="ZINC PHOSPHODIESTERASE ELAC PROTEIN 1"/>
    <property type="match status" value="1"/>
</dbReference>
<dbReference type="Pfam" id="PF00753">
    <property type="entry name" value="Lactamase_B"/>
    <property type="match status" value="1"/>
</dbReference>
<dbReference type="SUPFAM" id="SSF56281">
    <property type="entry name" value="Metallo-hydrolase/oxidoreductase"/>
    <property type="match status" value="1"/>
</dbReference>
<evidence type="ECO:0000255" key="1">
    <source>
        <dbReference type="HAMAP-Rule" id="MF_01818"/>
    </source>
</evidence>